<keyword id="KW-0002">3D-structure</keyword>
<keyword id="KW-0007">Acetylation</keyword>
<keyword id="KW-0025">Alternative splicing</keyword>
<keyword id="KW-0053">Apoptosis</keyword>
<keyword id="KW-0131">Cell cycle</keyword>
<keyword id="KW-0132">Cell division</keyword>
<keyword id="KW-0156">Chromatin regulator</keyword>
<keyword id="KW-0963">Cytoplasm</keyword>
<keyword id="KW-0227">DNA damage</keyword>
<keyword id="KW-0234">DNA repair</keyword>
<keyword id="KW-0498">Mitosis</keyword>
<keyword id="KW-0539">Nucleus</keyword>
<keyword id="KW-0597">Phosphoprotein</keyword>
<keyword id="KW-1267">Proteomics identification</keyword>
<keyword id="KW-1185">Reference proteome</keyword>
<keyword id="KW-0677">Repeat</keyword>
<keyword id="KW-0833">Ubl conjugation pathway</keyword>
<gene>
    <name evidence="26" type="primary">BABAM2</name>
    <name type="synonym">BRCC45</name>
    <name type="synonym">BRE</name>
</gene>
<feature type="chain" id="PRO_0000224189" description="BRISC and BRCA1-A complex member 2">
    <location>
        <begin position="1"/>
        <end position="383"/>
    </location>
</feature>
<feature type="region of interest" description="UEV-like 1">
    <location>
        <begin position="30"/>
        <end position="147"/>
    </location>
</feature>
<feature type="region of interest" description="UEV-like 2">
    <location>
        <begin position="275"/>
        <end position="364"/>
    </location>
</feature>
<feature type="modified residue" description="N-acetylmethionine" evidence="27 28 29">
    <location>
        <position position="1"/>
    </location>
</feature>
<feature type="modified residue" description="Phosphoserine" evidence="28 30">
    <location>
        <position position="2"/>
    </location>
</feature>
<feature type="splice variant" id="VSP_051957" description="In isoform 3." evidence="14">
    <original>KAYFKTFVPQFQEAAFANGKL</original>
    <variation>NSRRQHLPMESSRKHQS</variation>
    <location>
        <begin position="363"/>
        <end position="383"/>
    </location>
</feature>
<feature type="splice variant" id="VSP_051956" description="In isoform 1." evidence="16">
    <original>AYFKTFVPQFQEAAFANGKL</original>
    <variation>GCQGSRDACSPWEQVLAFAVAKTGCKLLQPQRNWPSSRGPPWRASEGERTAQ</variation>
    <location>
        <begin position="364"/>
        <end position="383"/>
    </location>
</feature>
<feature type="splice variant" id="VSP_037261" description="In isoform 4." evidence="14">
    <original>AYFKTFVPQFQEAAFANGKL</original>
    <variation>RESNRDGEESSSA</variation>
    <location>
        <begin position="364"/>
        <end position="383"/>
    </location>
</feature>
<feature type="sequence conflict" description="In Ref. 5; BAF83775." evidence="18" ref="5">
    <original>V</original>
    <variation>L</variation>
    <location>
        <position position="192"/>
    </location>
</feature>
<organism>
    <name type="scientific">Homo sapiens</name>
    <name type="common">Human</name>
    <dbReference type="NCBI Taxonomy" id="9606"/>
    <lineage>
        <taxon>Eukaryota</taxon>
        <taxon>Metazoa</taxon>
        <taxon>Chordata</taxon>
        <taxon>Craniata</taxon>
        <taxon>Vertebrata</taxon>
        <taxon>Euteleostomi</taxon>
        <taxon>Mammalia</taxon>
        <taxon>Eutheria</taxon>
        <taxon>Euarchontoglires</taxon>
        <taxon>Primates</taxon>
        <taxon>Haplorrhini</taxon>
        <taxon>Catarrhini</taxon>
        <taxon>Hominidae</taxon>
        <taxon>Homo</taxon>
    </lineage>
</organism>
<evidence type="ECO:0000255" key="1"/>
<evidence type="ECO:0000269" key="2">
    <source>
    </source>
</evidence>
<evidence type="ECO:0000269" key="3">
    <source>
    </source>
</evidence>
<evidence type="ECO:0000269" key="4">
    <source>
    </source>
</evidence>
<evidence type="ECO:0000269" key="5">
    <source>
    </source>
</evidence>
<evidence type="ECO:0000269" key="6">
    <source>
    </source>
</evidence>
<evidence type="ECO:0000269" key="7">
    <source>
    </source>
</evidence>
<evidence type="ECO:0000269" key="8">
    <source>
    </source>
</evidence>
<evidence type="ECO:0000269" key="9">
    <source>
    </source>
</evidence>
<evidence type="ECO:0000269" key="10">
    <source>
    </source>
</evidence>
<evidence type="ECO:0000269" key="11">
    <source>
    </source>
</evidence>
<evidence type="ECO:0000269" key="12">
    <source>
    </source>
</evidence>
<evidence type="ECO:0000269" key="13">
    <source>
    </source>
</evidence>
<evidence type="ECO:0000303" key="14">
    <source>
    </source>
</evidence>
<evidence type="ECO:0000303" key="15">
    <source>
    </source>
</evidence>
<evidence type="ECO:0000303" key="16">
    <source>
    </source>
</evidence>
<evidence type="ECO:0000303" key="17">
    <source>
    </source>
</evidence>
<evidence type="ECO:0000305" key="18"/>
<evidence type="ECO:0000305" key="19">
    <source>
    </source>
</evidence>
<evidence type="ECO:0000312" key="20">
    <source>
        <dbReference type="EMBL" id="AAA64231.1"/>
    </source>
</evidence>
<evidence type="ECO:0000312" key="21">
    <source>
        <dbReference type="EMBL" id="AAB69387.1"/>
    </source>
</evidence>
<evidence type="ECO:0000312" key="22">
    <source>
        <dbReference type="EMBL" id="AAH01251.1"/>
    </source>
</evidence>
<evidence type="ECO:0000312" key="23">
    <source>
        <dbReference type="EMBL" id="AAL17818.1"/>
    </source>
</evidence>
<evidence type="ECO:0000312" key="24">
    <source>
        <dbReference type="EMBL" id="AAR30499.1"/>
    </source>
</evidence>
<evidence type="ECO:0000312" key="25">
    <source>
        <dbReference type="EMBL" id="BAA90943.1"/>
    </source>
</evidence>
<evidence type="ECO:0000312" key="26">
    <source>
        <dbReference type="HGNC" id="HGNC:1106"/>
    </source>
</evidence>
<evidence type="ECO:0007744" key="27">
    <source>
    </source>
</evidence>
<evidence type="ECO:0007744" key="28">
    <source>
    </source>
</evidence>
<evidence type="ECO:0007744" key="29">
    <source>
    </source>
</evidence>
<evidence type="ECO:0007744" key="30">
    <source>
    </source>
</evidence>
<name>BABA2_HUMAN</name>
<dbReference type="EMBL" id="L38616">
    <property type="protein sequence ID" value="AAA64231.1"/>
    <property type="molecule type" value="mRNA"/>
</dbReference>
<dbReference type="EMBL" id="AF420605">
    <property type="protein sequence ID" value="AAL17818.1"/>
    <property type="molecule type" value="mRNA"/>
</dbReference>
<dbReference type="EMBL" id="AY438031">
    <property type="protein sequence ID" value="AAR30499.1"/>
    <property type="molecule type" value="mRNA"/>
</dbReference>
<dbReference type="EMBL" id="AF015767">
    <property type="protein sequence ID" value="AAB69387.1"/>
    <property type="molecule type" value="mRNA"/>
</dbReference>
<dbReference type="EMBL" id="AF420602">
    <property type="protein sequence ID" value="AAL17814.1"/>
    <property type="molecule type" value="mRNA"/>
</dbReference>
<dbReference type="EMBL" id="AF420603">
    <property type="protein sequence ID" value="AAL17816.1"/>
    <property type="molecule type" value="mRNA"/>
</dbReference>
<dbReference type="EMBL" id="AK000097">
    <property type="protein sequence ID" value="BAA90943.1"/>
    <property type="molecule type" value="mRNA"/>
</dbReference>
<dbReference type="EMBL" id="AK291086">
    <property type="protein sequence ID" value="BAF83775.1"/>
    <property type="molecule type" value="mRNA"/>
</dbReference>
<dbReference type="EMBL" id="AC021171">
    <property type="protein sequence ID" value="AAY24156.1"/>
    <property type="molecule type" value="Genomic_DNA"/>
</dbReference>
<dbReference type="EMBL" id="AC093690">
    <property type="status" value="NOT_ANNOTATED_CDS"/>
    <property type="molecule type" value="Genomic_DNA"/>
</dbReference>
<dbReference type="EMBL" id="AC096552">
    <property type="protein sequence ID" value="AAX88935.1"/>
    <property type="molecule type" value="Genomic_DNA"/>
</dbReference>
<dbReference type="EMBL" id="CH471053">
    <property type="protein sequence ID" value="EAX00545.1"/>
    <property type="molecule type" value="Genomic_DNA"/>
</dbReference>
<dbReference type="EMBL" id="CH471053">
    <property type="protein sequence ID" value="EAX00546.1"/>
    <property type="molecule type" value="Genomic_DNA"/>
</dbReference>
<dbReference type="EMBL" id="CH471053">
    <property type="protein sequence ID" value="EAX00547.1"/>
    <property type="molecule type" value="Genomic_DNA"/>
</dbReference>
<dbReference type="EMBL" id="CH471053">
    <property type="protein sequence ID" value="EAX00548.1"/>
    <property type="molecule type" value="Genomic_DNA"/>
</dbReference>
<dbReference type="EMBL" id="BC001251">
    <property type="protein sequence ID" value="AAH01251.1"/>
    <property type="molecule type" value="mRNA"/>
</dbReference>
<dbReference type="CCDS" id="CCDS1763.1">
    <molecule id="Q9NXR7-2"/>
</dbReference>
<dbReference type="CCDS" id="CCDS1764.1">
    <molecule id="Q9NXR7-1"/>
</dbReference>
<dbReference type="CCDS" id="CCDS1765.1">
    <molecule id="Q9NXR7-4"/>
</dbReference>
<dbReference type="PIR" id="JC2472">
    <property type="entry name" value="JC2472"/>
</dbReference>
<dbReference type="RefSeq" id="NP_001248769.1">
    <molecule id="Q9NXR7-3"/>
    <property type="nucleotide sequence ID" value="NM_001261840.2"/>
</dbReference>
<dbReference type="RefSeq" id="NP_001316041.1">
    <molecule id="Q9NXR7-2"/>
    <property type="nucleotide sequence ID" value="NM_001329112.1"/>
</dbReference>
<dbReference type="RefSeq" id="NP_001316042.1">
    <molecule id="Q9NXR7-1"/>
    <property type="nucleotide sequence ID" value="NM_001329113.2"/>
</dbReference>
<dbReference type="RefSeq" id="NP_004890.2">
    <molecule id="Q9NXR7-1"/>
    <property type="nucleotide sequence ID" value="NM_004899.4"/>
</dbReference>
<dbReference type="RefSeq" id="NP_954661.1">
    <molecule id="Q9NXR7-2"/>
    <property type="nucleotide sequence ID" value="NM_199191.3"/>
</dbReference>
<dbReference type="RefSeq" id="NP_954662.1">
    <molecule id="Q9NXR7-4"/>
    <property type="nucleotide sequence ID" value="NM_199192.3"/>
</dbReference>
<dbReference type="RefSeq" id="NP_954663.1">
    <molecule id="Q9NXR7-4"/>
    <property type="nucleotide sequence ID" value="NM_199193.3"/>
</dbReference>
<dbReference type="RefSeq" id="NP_954664.1">
    <molecule id="Q9NXR7-2"/>
    <property type="nucleotide sequence ID" value="NM_199194.3"/>
</dbReference>
<dbReference type="PDB" id="6H3C">
    <property type="method" value="EM"/>
    <property type="resolution" value="3.90 A"/>
    <property type="chains" value="C/H=1-383"/>
</dbReference>
<dbReference type="PDB" id="6R8F">
    <property type="method" value="EM"/>
    <property type="resolution" value="3.80 A"/>
    <property type="chains" value="E/G=1-133"/>
</dbReference>
<dbReference type="PDB" id="8PVY">
    <property type="method" value="EM"/>
    <property type="resolution" value="3.02 A"/>
    <property type="chains" value="E/F/K/L=1-383"/>
</dbReference>
<dbReference type="PDB" id="8PY2">
    <property type="method" value="EM"/>
    <property type="resolution" value="3.32 A"/>
    <property type="chains" value="E/F/K/L=1-383"/>
</dbReference>
<dbReference type="PDBsum" id="6H3C"/>
<dbReference type="PDBsum" id="6R8F"/>
<dbReference type="PDBsum" id="8PVY"/>
<dbReference type="PDBsum" id="8PY2"/>
<dbReference type="EMDB" id="EMD-0132"/>
<dbReference type="EMDB" id="EMD-17980"/>
<dbReference type="EMDB" id="EMD-18009"/>
<dbReference type="EMDB" id="EMD-4759"/>
<dbReference type="SMR" id="Q9NXR7"/>
<dbReference type="BioGRID" id="114946">
    <property type="interactions" value="94"/>
</dbReference>
<dbReference type="ComplexPortal" id="CPX-4425">
    <property type="entry name" value="BRCA1-A complex"/>
</dbReference>
<dbReference type="ComplexPortal" id="CPX-9341">
    <property type="entry name" value="BRISC-SHMT2 complex"/>
</dbReference>
<dbReference type="ComplexPortal" id="CPX-9421">
    <property type="entry name" value="BRISC complex"/>
</dbReference>
<dbReference type="ComplexPortal" id="CPX-955">
    <property type="entry name" value="BRCC E3 ubiquitin ligase complex"/>
</dbReference>
<dbReference type="CORUM" id="Q9NXR7"/>
<dbReference type="FunCoup" id="Q9NXR7">
    <property type="interactions" value="3087"/>
</dbReference>
<dbReference type="IntAct" id="Q9NXR7">
    <property type="interactions" value="46"/>
</dbReference>
<dbReference type="MINT" id="Q9NXR7"/>
<dbReference type="STRING" id="9606.ENSP00000343412"/>
<dbReference type="BindingDB" id="Q9NXR7"/>
<dbReference type="GlyGen" id="Q9NXR7">
    <property type="glycosylation" value="1 site, 1 N-linked glycan (1 site)"/>
</dbReference>
<dbReference type="iPTMnet" id="Q9NXR7"/>
<dbReference type="PhosphoSitePlus" id="Q9NXR7"/>
<dbReference type="BioMuta" id="BABAM2"/>
<dbReference type="DMDM" id="229462810"/>
<dbReference type="jPOST" id="Q9NXR7"/>
<dbReference type="MassIVE" id="Q9NXR7"/>
<dbReference type="PaxDb" id="9606-ENSP00000343412"/>
<dbReference type="PeptideAtlas" id="Q9NXR7"/>
<dbReference type="ProteomicsDB" id="83124">
    <molecule id="Q9NXR7-2"/>
</dbReference>
<dbReference type="ProteomicsDB" id="83125">
    <molecule id="Q9NXR7-1"/>
</dbReference>
<dbReference type="ProteomicsDB" id="83126">
    <molecule id="Q9NXR7-3"/>
</dbReference>
<dbReference type="ProteomicsDB" id="83127">
    <molecule id="Q9NXR7-4"/>
</dbReference>
<dbReference type="Pumba" id="Q9NXR7"/>
<dbReference type="Antibodypedia" id="13903">
    <property type="antibodies" value="248 antibodies from 35 providers"/>
</dbReference>
<dbReference type="DNASU" id="9577"/>
<dbReference type="Ensembl" id="ENST00000342045.6">
    <molecule id="Q9NXR7-2"/>
    <property type="protein sequence ID" value="ENSP00000339371.2"/>
    <property type="gene ID" value="ENSG00000158019.21"/>
</dbReference>
<dbReference type="Ensembl" id="ENST00000344773.6">
    <molecule id="Q9NXR7-1"/>
    <property type="protein sequence ID" value="ENSP00000343412.2"/>
    <property type="gene ID" value="ENSG00000158019.21"/>
</dbReference>
<dbReference type="Ensembl" id="ENST00000361704.6">
    <molecule id="Q9NXR7-4"/>
    <property type="protein sequence ID" value="ENSP00000354699.2"/>
    <property type="gene ID" value="ENSG00000158019.21"/>
</dbReference>
<dbReference type="Ensembl" id="ENST00000379624.6">
    <molecule id="Q9NXR7-2"/>
    <property type="protein sequence ID" value="ENSP00000368945.1"/>
    <property type="gene ID" value="ENSG00000158019.21"/>
</dbReference>
<dbReference type="Ensembl" id="ENST00000379632.6">
    <molecule id="Q9NXR7-4"/>
    <property type="protein sequence ID" value="ENSP00000368953.2"/>
    <property type="gene ID" value="ENSG00000158019.21"/>
</dbReference>
<dbReference type="GeneID" id="9577"/>
<dbReference type="KEGG" id="hsa:9577"/>
<dbReference type="MANE-Select" id="ENST00000379624.6">
    <property type="protein sequence ID" value="ENSP00000368945.1"/>
    <property type="RefSeq nucleotide sequence ID" value="NM_199191.3"/>
    <property type="RefSeq protein sequence ID" value="NP_954661.1"/>
</dbReference>
<dbReference type="UCSC" id="uc002rlq.4">
    <molecule id="Q9NXR7-2"/>
    <property type="organism name" value="human"/>
</dbReference>
<dbReference type="AGR" id="HGNC:1106"/>
<dbReference type="CTD" id="9577"/>
<dbReference type="DisGeNET" id="9577"/>
<dbReference type="GeneCards" id="BABAM2"/>
<dbReference type="HGNC" id="HGNC:1106">
    <property type="gene designation" value="BABAM2"/>
</dbReference>
<dbReference type="HPA" id="ENSG00000158019">
    <property type="expression patterns" value="Tissue enriched (adrenal)"/>
</dbReference>
<dbReference type="MIM" id="610497">
    <property type="type" value="gene"/>
</dbReference>
<dbReference type="neXtProt" id="NX_Q9NXR7"/>
<dbReference type="OpenTargets" id="ENSG00000158019"/>
<dbReference type="PharmGKB" id="PA25419"/>
<dbReference type="VEuPathDB" id="HostDB:ENSG00000158019"/>
<dbReference type="eggNOG" id="ENOG502QUU0">
    <property type="taxonomic scope" value="Eukaryota"/>
</dbReference>
<dbReference type="GeneTree" id="ENSGT00390000004208"/>
<dbReference type="HOGENOM" id="CLU_057019_0_0_1"/>
<dbReference type="InParanoid" id="Q9NXR7"/>
<dbReference type="OMA" id="AGSTWRH"/>
<dbReference type="OrthoDB" id="538811at2759"/>
<dbReference type="PAN-GO" id="Q9NXR7">
    <property type="GO annotations" value="2 GO annotations based on evolutionary models"/>
</dbReference>
<dbReference type="PhylomeDB" id="Q9NXR7"/>
<dbReference type="TreeFam" id="TF328507"/>
<dbReference type="PathwayCommons" id="Q9NXR7"/>
<dbReference type="Reactome" id="R-HSA-5689901">
    <property type="pathway name" value="Metalloprotease DUBs"/>
</dbReference>
<dbReference type="Reactome" id="R-HSA-5693565">
    <property type="pathway name" value="Recruitment and ATM-mediated phosphorylation of repair and signaling proteins at DNA double strand breaks"/>
</dbReference>
<dbReference type="Reactome" id="R-HSA-5693571">
    <property type="pathway name" value="Nonhomologous End-Joining (NHEJ)"/>
</dbReference>
<dbReference type="Reactome" id="R-HSA-5693607">
    <property type="pathway name" value="Processing of DNA double-strand break ends"/>
</dbReference>
<dbReference type="Reactome" id="R-HSA-69473">
    <property type="pathway name" value="G2/M DNA damage checkpoint"/>
</dbReference>
<dbReference type="SignaLink" id="Q9NXR7"/>
<dbReference type="SIGNOR" id="Q9NXR7"/>
<dbReference type="BioGRID-ORCS" id="9577">
    <property type="hits" value="19 hits in 1169 CRISPR screens"/>
</dbReference>
<dbReference type="ChiTaRS" id="BRE">
    <property type="organism name" value="human"/>
</dbReference>
<dbReference type="GeneWiki" id="BRE_(gene)"/>
<dbReference type="GenomeRNAi" id="9577"/>
<dbReference type="Pharos" id="Q9NXR7">
    <property type="development level" value="Tbio"/>
</dbReference>
<dbReference type="PRO" id="PR:Q9NXR7"/>
<dbReference type="Proteomes" id="UP000005640">
    <property type="component" value="Chromosome 2"/>
</dbReference>
<dbReference type="RNAct" id="Q9NXR7">
    <property type="molecule type" value="protein"/>
</dbReference>
<dbReference type="Bgee" id="ENSG00000158019">
    <property type="expression patterns" value="Expressed in right adrenal gland and 201 other cell types or tissues"/>
</dbReference>
<dbReference type="ExpressionAtlas" id="Q9NXR7">
    <property type="expression patterns" value="baseline and differential"/>
</dbReference>
<dbReference type="GO" id="GO:0070531">
    <property type="term" value="C:BRCA1-A complex"/>
    <property type="evidence" value="ECO:0000314"/>
    <property type="project" value="UniProtKB"/>
</dbReference>
<dbReference type="GO" id="GO:0070552">
    <property type="term" value="C:BRISC complex"/>
    <property type="evidence" value="ECO:0000314"/>
    <property type="project" value="UniProtKB"/>
</dbReference>
<dbReference type="GO" id="GO:0005737">
    <property type="term" value="C:cytoplasm"/>
    <property type="evidence" value="ECO:0000314"/>
    <property type="project" value="UniProtKB"/>
</dbReference>
<dbReference type="GO" id="GO:0005829">
    <property type="term" value="C:cytosol"/>
    <property type="evidence" value="ECO:0000314"/>
    <property type="project" value="HPA"/>
</dbReference>
<dbReference type="GO" id="GO:0000152">
    <property type="term" value="C:nuclear ubiquitin ligase complex"/>
    <property type="evidence" value="ECO:0000314"/>
    <property type="project" value="UniProtKB"/>
</dbReference>
<dbReference type="GO" id="GO:0005654">
    <property type="term" value="C:nucleoplasm"/>
    <property type="evidence" value="ECO:0000304"/>
    <property type="project" value="Reactome"/>
</dbReference>
<dbReference type="GO" id="GO:0005634">
    <property type="term" value="C:nucleus"/>
    <property type="evidence" value="ECO:0000314"/>
    <property type="project" value="UniProtKB"/>
</dbReference>
<dbReference type="GO" id="GO:0000268">
    <property type="term" value="F:peroxisome targeting sequence binding"/>
    <property type="evidence" value="ECO:0000304"/>
    <property type="project" value="UniProtKB"/>
</dbReference>
<dbReference type="GO" id="GO:0031593">
    <property type="term" value="F:polyubiquitin modification-dependent protein binding"/>
    <property type="evidence" value="ECO:0000314"/>
    <property type="project" value="UniProtKB"/>
</dbReference>
<dbReference type="GO" id="GO:0005164">
    <property type="term" value="F:tumor necrosis factor receptor binding"/>
    <property type="evidence" value="ECO:0000314"/>
    <property type="project" value="UniProtKB"/>
</dbReference>
<dbReference type="GO" id="GO:0006915">
    <property type="term" value="P:apoptotic process"/>
    <property type="evidence" value="ECO:0007669"/>
    <property type="project" value="UniProtKB-KW"/>
</dbReference>
<dbReference type="GO" id="GO:0051301">
    <property type="term" value="P:cell division"/>
    <property type="evidence" value="ECO:0007669"/>
    <property type="project" value="UniProtKB-KW"/>
</dbReference>
<dbReference type="GO" id="GO:0071479">
    <property type="term" value="P:cellular response to ionizing radiation"/>
    <property type="evidence" value="ECO:0000315"/>
    <property type="project" value="ComplexPortal"/>
</dbReference>
<dbReference type="GO" id="GO:0006325">
    <property type="term" value="P:chromatin organization"/>
    <property type="evidence" value="ECO:0007669"/>
    <property type="project" value="UniProtKB-KW"/>
</dbReference>
<dbReference type="GO" id="GO:0006974">
    <property type="term" value="P:DNA damage response"/>
    <property type="evidence" value="ECO:0000270"/>
    <property type="project" value="UniProtKB"/>
</dbReference>
<dbReference type="GO" id="GO:0006302">
    <property type="term" value="P:double-strand break repair"/>
    <property type="evidence" value="ECO:0000315"/>
    <property type="project" value="UniProtKB"/>
</dbReference>
<dbReference type="GO" id="GO:0007095">
    <property type="term" value="P:mitotic G2 DNA damage checkpoint signaling"/>
    <property type="evidence" value="ECO:0000315"/>
    <property type="project" value="UniProtKB"/>
</dbReference>
<dbReference type="GO" id="GO:0044818">
    <property type="term" value="P:mitotic G2/M transition checkpoint"/>
    <property type="evidence" value="ECO:0000303"/>
    <property type="project" value="ComplexPortal"/>
</dbReference>
<dbReference type="GO" id="GO:0043066">
    <property type="term" value="P:negative regulation of apoptotic process"/>
    <property type="evidence" value="ECO:0000314"/>
    <property type="project" value="UniProtKB"/>
</dbReference>
<dbReference type="GO" id="GO:0045739">
    <property type="term" value="P:positive regulation of DNA repair"/>
    <property type="evidence" value="ECO:0000315"/>
    <property type="project" value="UniProtKB"/>
</dbReference>
<dbReference type="GO" id="GO:0070536">
    <property type="term" value="P:protein K63-linked deubiquitination"/>
    <property type="evidence" value="ECO:0000305"/>
    <property type="project" value="UniProtKB"/>
</dbReference>
<dbReference type="GO" id="GO:2000001">
    <property type="term" value="P:regulation of DNA damage checkpoint"/>
    <property type="evidence" value="ECO:0000303"/>
    <property type="project" value="ComplexPortal"/>
</dbReference>
<dbReference type="GO" id="GO:0006282">
    <property type="term" value="P:regulation of DNA repair"/>
    <property type="evidence" value="ECO:0000303"/>
    <property type="project" value="ComplexPortal"/>
</dbReference>
<dbReference type="GO" id="GO:0010212">
    <property type="term" value="P:response to ionizing radiation"/>
    <property type="evidence" value="ECO:0000315"/>
    <property type="project" value="UniProtKB"/>
</dbReference>
<dbReference type="GO" id="GO:0007165">
    <property type="term" value="P:signal transduction"/>
    <property type="evidence" value="ECO:0000304"/>
    <property type="project" value="ProtInc"/>
</dbReference>
<dbReference type="CDD" id="cd23664">
    <property type="entry name" value="BRE"/>
    <property type="match status" value="1"/>
</dbReference>
<dbReference type="InterPro" id="IPR010358">
    <property type="entry name" value="BRE"/>
</dbReference>
<dbReference type="PANTHER" id="PTHR15189">
    <property type="entry name" value="BRISC AND BRCA1-A COMPLEX MEMBER 2"/>
    <property type="match status" value="1"/>
</dbReference>
<dbReference type="PANTHER" id="PTHR15189:SF7">
    <property type="entry name" value="BRISC AND BRCA1-A COMPLEX MEMBER 2"/>
    <property type="match status" value="1"/>
</dbReference>
<dbReference type="Pfam" id="PF06113">
    <property type="entry name" value="BRE"/>
    <property type="match status" value="1"/>
</dbReference>
<comment type="function">
    <text evidence="3 8 9 10 12 19">Component of the BRCA1-A complex, a complex that specifically recognizes 'Lys-63'-linked ubiquitinated histones H2A and H2AX at DNA lesions sites, leading to target the BRCA1-BARD1 heterodimer to sites of DNA damage at double-strand breaks (DSBs). The BRCA1-A complex also possesses deubiquitinase activity that specifically removes 'Lys-63'-linked ubiquitin on histones H2A and H2AX (PubMed:17525341, PubMed:19261746, PubMed:19261748, PubMed:19261749). In the BRCA1-A complex, it acts as an adapter that bridges the interaction between BABAM1/NBA1 and the rest of the complex, thereby being required for the complex integrity and modulating the E3 ubiquitin ligase activity of the BRCA1-BARD1 heterodimer (PubMed:19261748, PubMed:21282113). Component of the BRISC complex, a multiprotein complex that specifically cleaves 'Lys-63'-linked ubiquitin in various substrates (PubMed:19214193, PubMed:24075985, PubMed:25283148, PubMed:26195665). Within the BRISC complex, acts as an adapter that bridges the interaction between BABAM1/NBA1 and the rest of the complex, thereby being required for the complex integrity (PubMed:21282113). The BRISC complex is required for normal mitotic spindle assembly and microtubule attachment to kinetochores via its role in deubiquitinating NUMA1 (PubMed:26195665). The BRISC complex plays a role in interferon signaling via its role in the deubiquitination of the interferon receptor IFNAR1; deubiquitination increases IFNAR1 activity by enhancing its stability and cell surface expression (PubMed:24075985). Down-regulates the response to bacterial lipopolysaccharide (LPS) via its role in IFNAR1 deubiquitination (PubMed:24075985). May play a role in homeostasis or cellular differentiation in cells of neural, epithelial and germline origins. May also act as a death receptor-associated anti-apoptotic protein, which inhibits the mitochondrial apoptotic pathway. May regulate TNF-alpha signaling through its interactions with TNFRSF1A; however these effects may be indirect (PubMed:15465831).</text>
</comment>
<comment type="subunit">
    <text evidence="3 5 6 7 8 9 10 11 19">Component of the ARISC complex, at least composed of UIMC1/RAP80, ABRAXAS1, BRCC3/BRCC36, BABAM2 and BABAM1/NBA1 (PubMed:21282113, PubMed:24075985). Component of the BRCA1-A complex, at least composed of BRCA1, BARD1, UIMC1/RAP80, ABRAXAS1, BRCC3/BRCC36, BABAM2 and BABAM1/NBA1. In the BRCA1-A complex, interacts directly with ABRAXAS1, BRCC3/BRCC36 and BABAM1/NBA1. Binds polyubiquitin. Component of the BRISC complex, at least composed of ABRAXAS2, BRCC3/BRCC36, BABAM2 and BABAM1/NBA1 (PubMed:19214193, PubMed:21282113, PubMed:24075985, PubMed:25283148). Identified in a complex with SHMT2 and the other subunits of the BRISC complex (PubMed:24075985). Component of the BRCA1/BRCA2 containing complex (BRCC), which also contains BRCA1, BRCA2, BARD1, BRCC3/BRCC36 and RAD51. BRCC is a ubiquitin E3 ligase complex that enhances cellular survival following DNA damage. May interact with FAS and TNFRSF1A (PubMed:15465831).</text>
</comment>
<comment type="interaction">
    <interactant intactId="EBI-949389">
        <id>Q9NXR7</id>
    </interactant>
    <interactant intactId="EBI-745725">
        <id>Q9NWV8</id>
        <label>BABAM1</label>
    </interactant>
    <organismsDiffer>false</organismsDiffer>
    <experiments>16</experiments>
</comment>
<comment type="subcellular location">
    <subcellularLocation>
        <location evidence="4 10">Cytoplasm</location>
    </subcellularLocation>
    <subcellularLocation>
        <location evidence="4 8 10">Nucleus</location>
    </subcellularLocation>
    <text evidence="8">Localizes at sites of DNA damage at double-strand breaks (DSBs).</text>
</comment>
<comment type="alternative products">
    <event type="alternative splicing"/>
    <isoform>
        <id>Q9NXR7-2</id>
        <name evidence="3">2</name>
        <sequence type="displayed"/>
    </isoform>
    <isoform>
        <id>Q9NXR7-1</id>
        <name evidence="18">1</name>
        <sequence type="described" ref="VSP_051956"/>
    </isoform>
    <isoform>
        <id>Q9NXR7-3</id>
        <name evidence="2">3</name>
        <name>Alpha a'</name>
        <sequence type="described" ref="VSP_051957"/>
    </isoform>
    <isoform>
        <id>Q9NXR7-4</id>
        <name>4</name>
        <sequence type="described" ref="VSP_037261"/>
    </isoform>
    <text evidence="18">Additional isoforms may exist.</text>
</comment>
<comment type="tissue specificity">
    <text evidence="2">Expressed in all cell lines examined. Highly expressed in placenta.</text>
</comment>
<comment type="induction">
    <text evidence="2 13">Down-regulated by DNA-damaging agents in fibroblasts, by retinoic acid in brain glioma U-251MG and promyelocytic HL-60 cell lines, and by bacterial lipopolysaccharides (LPS) in peripheral blood mononuclear cells (PBMC).</text>
</comment>
<comment type="domain">
    <text evidence="9">Contains 2 ubiquitin-conjugating enzyme family-like (UEV-like) regions. These regions lack the critical Cys residues required for ubiquitination but retain the ability to bind ubiquitin.</text>
</comment>
<comment type="similarity">
    <text evidence="1">Belongs to the BABAM2 family.</text>
</comment>
<comment type="online information" name="Atlas of Genetics and Cytogenetics in Oncology and Haematology">
    <link uri="https://atlasgeneticsoncology.org/gene/839/BRE"/>
</comment>
<accession>Q9NXR7</accession>
<accession>A8K4X1</accession>
<accession>D6W562</accession>
<accession>D6W563</accession>
<accession>Q13880</accession>
<accession>Q4ZFX8</accession>
<accession>Q53SD0</accession>
<accession>Q969X9</accession>
<accession>Q96P06</accession>
<sequence length="383" mass="43552">MSPEVALNRISPMLSPFISSVVRNGKVGLDATNCLRITDLKSGCTSLTPGPNCDRFKLHIPYAGETLKWDIIFNAQYPELPPDFIFGEDAEFLPDPSALQNLASWNPSNPECLLLVVKELVQQYHQFQCSRLRESSRLMFEYQTLLEEPQYGENMEIYAGKKNNWTGEFSARFLLKLPVDFSNIPTYLLKDVNEDPGEDVALLSVSFEDTEATQVYPKLYLSPRIEHALGGSSALHIPAFPGGGCLIDYVPQVCHLLTNKVQYVIQGYHKRREYIAAFLSHFGTGVVEYDAEGFTKLTLLLMWKDFCFLVHIDLPLFFPRDQPTLTFQSVYHFTNSGQLYSQAQKNYPYSPRWDGNEMAKRAKAYFKTFVPQFQEAAFANGKL</sequence>
<protein>
    <recommendedName>
        <fullName evidence="26">BRISC and BRCA1-A complex member 2</fullName>
    </recommendedName>
    <alternativeName>
        <fullName>BRCA1-A complex subunit BRE</fullName>
    </alternativeName>
    <alternativeName>
        <fullName evidence="15">BRCA1/BRCA2-containing complex subunit 45</fullName>
    </alternativeName>
    <alternativeName>
        <fullName evidence="17">Brain and reproductive organ-expressed protein</fullName>
    </alternativeName>
</protein>
<proteinExistence type="evidence at protein level"/>
<reference evidence="18 20" key="1">
    <citation type="journal article" date="1995" name="Biochem. Biophys. Res. Commun.">
        <title>Identification of a brain- and reproductive-organs-specific gene responsive to DNA damage and retinoic acid.</title>
        <authorList>
            <person name="Li L."/>
            <person name="Yoo H."/>
            <person name="Becker F.F."/>
            <person name="Ali-Osman F."/>
            <person name="Chan J.Y.-H."/>
        </authorList>
    </citation>
    <scope>NUCLEOTIDE SEQUENCE [MRNA] (ISOFORM 2)</scope>
    <scope>INDUCTION</scope>
</reference>
<reference evidence="18 23" key="2">
    <citation type="journal article" date="2001" name="Biochem. Biophys. Res. Commun.">
        <title>Expression of human BRE in multiple isoforms.</title>
        <authorList>
            <person name="Ching A.K.K."/>
            <person name="Li P.S."/>
            <person name="Li Q."/>
            <person name="Chan B.C.L."/>
            <person name="Chan J.Y.-H."/>
            <person name="Lim P.L."/>
            <person name="Pang J.C.S."/>
            <person name="Chui Y.L."/>
        </authorList>
    </citation>
    <scope>NUCLEOTIDE SEQUENCE [MRNA] (ISOFORMS 3 AND 4)</scope>
    <scope>TISSUE SPECIFICITY</scope>
    <scope>INDUCTION</scope>
    <source>
        <tissue evidence="2">Monocyte</tissue>
    </source>
</reference>
<reference evidence="18 24" key="3">
    <citation type="journal article" date="2003" name="Mol. Cell">
        <title>Regulation of BRCC, a holoenzyme complex containing BRCA1 and BRCA2, by a signalosome-like subunit and its role in DNA repair.</title>
        <authorList>
            <person name="Dong Y."/>
            <person name="Hakimi M.-A."/>
            <person name="Chen X."/>
            <person name="Kumaraswamy E."/>
            <person name="Cooch N.S."/>
            <person name="Godwin A.K."/>
            <person name="Shiekhattar R."/>
        </authorList>
    </citation>
    <scope>NUCLEOTIDE SEQUENCE [MRNA] (ISOFORM 2)</scope>
    <scope>FUNCTION</scope>
    <scope>IDENTIFICATION IN BRCC COMPLEX</scope>
</reference>
<reference evidence="18 21" key="4">
    <citation type="submission" date="1997-07" db="EMBL/GenBank/DDBJ databases">
        <authorList>
            <person name="Keeton K.R."/>
            <person name="Miles W.M."/>
        </authorList>
    </citation>
    <scope>NUCLEOTIDE SEQUENCE [MRNA] (ISOFORM 2)</scope>
</reference>
<reference evidence="18 25" key="5">
    <citation type="journal article" date="2004" name="Nat. Genet.">
        <title>Complete sequencing and characterization of 21,243 full-length human cDNAs.</title>
        <authorList>
            <person name="Ota T."/>
            <person name="Suzuki Y."/>
            <person name="Nishikawa T."/>
            <person name="Otsuki T."/>
            <person name="Sugiyama T."/>
            <person name="Irie R."/>
            <person name="Wakamatsu A."/>
            <person name="Hayashi K."/>
            <person name="Sato H."/>
            <person name="Nagai K."/>
            <person name="Kimura K."/>
            <person name="Makita H."/>
            <person name="Sekine M."/>
            <person name="Obayashi M."/>
            <person name="Nishi T."/>
            <person name="Shibahara T."/>
            <person name="Tanaka T."/>
            <person name="Ishii S."/>
            <person name="Yamamoto J."/>
            <person name="Saito K."/>
            <person name="Kawai Y."/>
            <person name="Isono Y."/>
            <person name="Nakamura Y."/>
            <person name="Nagahari K."/>
            <person name="Murakami K."/>
            <person name="Yasuda T."/>
            <person name="Iwayanagi T."/>
            <person name="Wagatsuma M."/>
            <person name="Shiratori A."/>
            <person name="Sudo H."/>
            <person name="Hosoiri T."/>
            <person name="Kaku Y."/>
            <person name="Kodaira H."/>
            <person name="Kondo H."/>
            <person name="Sugawara M."/>
            <person name="Takahashi M."/>
            <person name="Kanda K."/>
            <person name="Yokoi T."/>
            <person name="Furuya T."/>
            <person name="Kikkawa E."/>
            <person name="Omura Y."/>
            <person name="Abe K."/>
            <person name="Kamihara K."/>
            <person name="Katsuta N."/>
            <person name="Sato K."/>
            <person name="Tanikawa M."/>
            <person name="Yamazaki M."/>
            <person name="Ninomiya K."/>
            <person name="Ishibashi T."/>
            <person name="Yamashita H."/>
            <person name="Murakawa K."/>
            <person name="Fujimori K."/>
            <person name="Tanai H."/>
            <person name="Kimata M."/>
            <person name="Watanabe M."/>
            <person name="Hiraoka S."/>
            <person name="Chiba Y."/>
            <person name="Ishida S."/>
            <person name="Ono Y."/>
            <person name="Takiguchi S."/>
            <person name="Watanabe S."/>
            <person name="Yosida M."/>
            <person name="Hotuta T."/>
            <person name="Kusano J."/>
            <person name="Kanehori K."/>
            <person name="Takahashi-Fujii A."/>
            <person name="Hara H."/>
            <person name="Tanase T.-O."/>
            <person name="Nomura Y."/>
            <person name="Togiya S."/>
            <person name="Komai F."/>
            <person name="Hara R."/>
            <person name="Takeuchi K."/>
            <person name="Arita M."/>
            <person name="Imose N."/>
            <person name="Musashino K."/>
            <person name="Yuuki H."/>
            <person name="Oshima A."/>
            <person name="Sasaki N."/>
            <person name="Aotsuka S."/>
            <person name="Yoshikawa Y."/>
            <person name="Matsunawa H."/>
            <person name="Ichihara T."/>
            <person name="Shiohata N."/>
            <person name="Sano S."/>
            <person name="Moriya S."/>
            <person name="Momiyama H."/>
            <person name="Satoh N."/>
            <person name="Takami S."/>
            <person name="Terashima Y."/>
            <person name="Suzuki O."/>
            <person name="Nakagawa S."/>
            <person name="Senoh A."/>
            <person name="Mizoguchi H."/>
            <person name="Goto Y."/>
            <person name="Shimizu F."/>
            <person name="Wakebe H."/>
            <person name="Hishigaki H."/>
            <person name="Watanabe T."/>
            <person name="Sugiyama A."/>
            <person name="Takemoto M."/>
            <person name="Kawakami B."/>
            <person name="Yamazaki M."/>
            <person name="Watanabe K."/>
            <person name="Kumagai A."/>
            <person name="Itakura S."/>
            <person name="Fukuzumi Y."/>
            <person name="Fujimori Y."/>
            <person name="Komiyama M."/>
            <person name="Tashiro H."/>
            <person name="Tanigami A."/>
            <person name="Fujiwara T."/>
            <person name="Ono T."/>
            <person name="Yamada K."/>
            <person name="Fujii Y."/>
            <person name="Ozaki K."/>
            <person name="Hirao M."/>
            <person name="Ohmori Y."/>
            <person name="Kawabata A."/>
            <person name="Hikiji T."/>
            <person name="Kobatake N."/>
            <person name="Inagaki H."/>
            <person name="Ikema Y."/>
            <person name="Okamoto S."/>
            <person name="Okitani R."/>
            <person name="Kawakami T."/>
            <person name="Noguchi S."/>
            <person name="Itoh T."/>
            <person name="Shigeta K."/>
            <person name="Senba T."/>
            <person name="Matsumura K."/>
            <person name="Nakajima Y."/>
            <person name="Mizuno T."/>
            <person name="Morinaga M."/>
            <person name="Sasaki M."/>
            <person name="Togashi T."/>
            <person name="Oyama M."/>
            <person name="Hata H."/>
            <person name="Watanabe M."/>
            <person name="Komatsu T."/>
            <person name="Mizushima-Sugano J."/>
            <person name="Satoh T."/>
            <person name="Shirai Y."/>
            <person name="Takahashi Y."/>
            <person name="Nakagawa K."/>
            <person name="Okumura K."/>
            <person name="Nagase T."/>
            <person name="Nomura N."/>
            <person name="Kikuchi H."/>
            <person name="Masuho Y."/>
            <person name="Yamashita R."/>
            <person name="Nakai K."/>
            <person name="Yada T."/>
            <person name="Nakamura Y."/>
            <person name="Ohara O."/>
            <person name="Isogai T."/>
            <person name="Sugano S."/>
        </authorList>
    </citation>
    <scope>NUCLEOTIDE SEQUENCE [LARGE SCALE MRNA] (ISOFORM 1)</scope>
    <source>
        <tissue evidence="25">Colon</tissue>
        <tissue>Teratocarcinoma</tissue>
    </source>
</reference>
<reference key="6">
    <citation type="journal article" date="2005" name="Nature">
        <title>Generation and annotation of the DNA sequences of human chromosomes 2 and 4.</title>
        <authorList>
            <person name="Hillier L.W."/>
            <person name="Graves T.A."/>
            <person name="Fulton R.S."/>
            <person name="Fulton L.A."/>
            <person name="Pepin K.H."/>
            <person name="Minx P."/>
            <person name="Wagner-McPherson C."/>
            <person name="Layman D."/>
            <person name="Wylie K."/>
            <person name="Sekhon M."/>
            <person name="Becker M.C."/>
            <person name="Fewell G.A."/>
            <person name="Delehaunty K.D."/>
            <person name="Miner T.L."/>
            <person name="Nash W.E."/>
            <person name="Kremitzki C."/>
            <person name="Oddy L."/>
            <person name="Du H."/>
            <person name="Sun H."/>
            <person name="Bradshaw-Cordum H."/>
            <person name="Ali J."/>
            <person name="Carter J."/>
            <person name="Cordes M."/>
            <person name="Harris A."/>
            <person name="Isak A."/>
            <person name="van Brunt A."/>
            <person name="Nguyen C."/>
            <person name="Du F."/>
            <person name="Courtney L."/>
            <person name="Kalicki J."/>
            <person name="Ozersky P."/>
            <person name="Abbott S."/>
            <person name="Armstrong J."/>
            <person name="Belter E.A."/>
            <person name="Caruso L."/>
            <person name="Cedroni M."/>
            <person name="Cotton M."/>
            <person name="Davidson T."/>
            <person name="Desai A."/>
            <person name="Elliott G."/>
            <person name="Erb T."/>
            <person name="Fronick C."/>
            <person name="Gaige T."/>
            <person name="Haakenson W."/>
            <person name="Haglund K."/>
            <person name="Holmes A."/>
            <person name="Harkins R."/>
            <person name="Kim K."/>
            <person name="Kruchowski S.S."/>
            <person name="Strong C.M."/>
            <person name="Grewal N."/>
            <person name="Goyea E."/>
            <person name="Hou S."/>
            <person name="Levy A."/>
            <person name="Martinka S."/>
            <person name="Mead K."/>
            <person name="McLellan M.D."/>
            <person name="Meyer R."/>
            <person name="Randall-Maher J."/>
            <person name="Tomlinson C."/>
            <person name="Dauphin-Kohlberg S."/>
            <person name="Kozlowicz-Reilly A."/>
            <person name="Shah N."/>
            <person name="Swearengen-Shahid S."/>
            <person name="Snider J."/>
            <person name="Strong J.T."/>
            <person name="Thompson J."/>
            <person name="Yoakum M."/>
            <person name="Leonard S."/>
            <person name="Pearman C."/>
            <person name="Trani L."/>
            <person name="Radionenko M."/>
            <person name="Waligorski J.E."/>
            <person name="Wang C."/>
            <person name="Rock S.M."/>
            <person name="Tin-Wollam A.-M."/>
            <person name="Maupin R."/>
            <person name="Latreille P."/>
            <person name="Wendl M.C."/>
            <person name="Yang S.-P."/>
            <person name="Pohl C."/>
            <person name="Wallis J.W."/>
            <person name="Spieth J."/>
            <person name="Bieri T.A."/>
            <person name="Berkowicz N."/>
            <person name="Nelson J.O."/>
            <person name="Osborne J."/>
            <person name="Ding L."/>
            <person name="Meyer R."/>
            <person name="Sabo A."/>
            <person name="Shotland Y."/>
            <person name="Sinha P."/>
            <person name="Wohldmann P.E."/>
            <person name="Cook L.L."/>
            <person name="Hickenbotham M.T."/>
            <person name="Eldred J."/>
            <person name="Williams D."/>
            <person name="Jones T.A."/>
            <person name="She X."/>
            <person name="Ciccarelli F.D."/>
            <person name="Izaurralde E."/>
            <person name="Taylor J."/>
            <person name="Schmutz J."/>
            <person name="Myers R.M."/>
            <person name="Cox D.R."/>
            <person name="Huang X."/>
            <person name="McPherson J.D."/>
            <person name="Mardis E.R."/>
            <person name="Clifton S.W."/>
            <person name="Warren W.C."/>
            <person name="Chinwalla A.T."/>
            <person name="Eddy S.R."/>
            <person name="Marra M.A."/>
            <person name="Ovcharenko I."/>
            <person name="Furey T.S."/>
            <person name="Miller W."/>
            <person name="Eichler E.E."/>
            <person name="Bork P."/>
            <person name="Suyama M."/>
            <person name="Torrents D."/>
            <person name="Waterston R.H."/>
            <person name="Wilson R.K."/>
        </authorList>
    </citation>
    <scope>NUCLEOTIDE SEQUENCE [LARGE SCALE GENOMIC DNA]</scope>
</reference>
<reference evidence="18 21" key="7">
    <citation type="submission" date="2005-09" db="EMBL/GenBank/DDBJ databases">
        <authorList>
            <person name="Mural R.J."/>
            <person name="Istrail S."/>
            <person name="Sutton G.G."/>
            <person name="Florea L."/>
            <person name="Halpern A.L."/>
            <person name="Mobarry C.M."/>
            <person name="Lippert R."/>
            <person name="Walenz B."/>
            <person name="Shatkay H."/>
            <person name="Dew I."/>
            <person name="Miller J.R."/>
            <person name="Flanigan M.J."/>
            <person name="Edwards N.J."/>
            <person name="Bolanos R."/>
            <person name="Fasulo D."/>
            <person name="Halldorsson B.V."/>
            <person name="Hannenhalli S."/>
            <person name="Turner R."/>
            <person name="Yooseph S."/>
            <person name="Lu F."/>
            <person name="Nusskern D.R."/>
            <person name="Shue B.C."/>
            <person name="Zheng X.H."/>
            <person name="Zhong F."/>
            <person name="Delcher A.L."/>
            <person name="Huson D.H."/>
            <person name="Kravitz S.A."/>
            <person name="Mouchard L."/>
            <person name="Reinert K."/>
            <person name="Remington K.A."/>
            <person name="Clark A.G."/>
            <person name="Waterman M.S."/>
            <person name="Eichler E.E."/>
            <person name="Adams M.D."/>
            <person name="Hunkapiller M.W."/>
            <person name="Myers E.W."/>
            <person name="Venter J.C."/>
        </authorList>
    </citation>
    <scope>NUCLEOTIDE SEQUENCE [LARGE SCALE GENOMIC DNA]</scope>
</reference>
<reference evidence="18 22" key="8">
    <citation type="journal article" date="2004" name="Genome Res.">
        <title>The status, quality, and expansion of the NIH full-length cDNA project: the Mammalian Gene Collection (MGC).</title>
        <authorList>
            <consortium name="The MGC Project Team"/>
        </authorList>
    </citation>
    <scope>NUCLEOTIDE SEQUENCE [LARGE SCALE MRNA] (ISOFORM 2)</scope>
    <source>
        <tissue evidence="22">Cervix</tissue>
    </source>
</reference>
<reference evidence="18" key="9">
    <citation type="journal article" date="2004" name="J. Biol. Chem.">
        <title>A death receptor-associated anti-apoptotic protein, BRE, inhibits mitochondrial apoptotic pathway.</title>
        <authorList>
            <person name="Li Q."/>
            <person name="Ching A.K.-K."/>
            <person name="Chan B.C.-L."/>
            <person name="Chow S.K.-Y."/>
            <person name="Lim P.-L."/>
            <person name="Ho T.C.-Y."/>
            <person name="Ip W.-K."/>
            <person name="Wong C.-K."/>
            <person name="Lam C.W.-K."/>
            <person name="Lee K.K.-H."/>
            <person name="Chan J.Y.-H."/>
            <person name="Chui Y.-L."/>
        </authorList>
    </citation>
    <scope>FUNCTION</scope>
    <scope>INTERACTION WITH FAS AND TNFRSF1A</scope>
    <scope>SUBCELLULAR LOCATION</scope>
</reference>
<reference key="10">
    <citation type="journal article" date="2007" name="Science">
        <title>RAP80 targets BRCA1 to specific ubiquitin structures at DNA damage sites.</title>
        <authorList>
            <person name="Sobhian B."/>
            <person name="Shao G."/>
            <person name="Lilli D.R."/>
            <person name="Culhane A.C."/>
            <person name="Moreau L.A."/>
            <person name="Xia B."/>
            <person name="Livingston D.M."/>
            <person name="Greenberg R.A."/>
        </authorList>
    </citation>
    <scope>IDENTIFICATION IN THE BRCA1-A COMPLEX</scope>
</reference>
<reference key="11">
    <citation type="journal article" date="2009" name="Anal. Chem.">
        <title>Lys-N and trypsin cover complementary parts of the phosphoproteome in a refined SCX-based approach.</title>
        <authorList>
            <person name="Gauci S."/>
            <person name="Helbig A.O."/>
            <person name="Slijper M."/>
            <person name="Krijgsveld J."/>
            <person name="Heck A.J."/>
            <person name="Mohammed S."/>
        </authorList>
    </citation>
    <scope>ACETYLATION [LARGE SCALE ANALYSIS] AT MET-1</scope>
    <scope>IDENTIFICATION BY MASS SPECTROMETRY [LARGE SCALE ANALYSIS]</scope>
</reference>
<reference key="12">
    <citation type="journal article" date="2009" name="EMBO J.">
        <title>K63-specific deubiquitination by two JAMM/MPN+ complexes: BRISC-associated Brcc36 and proteasomal Poh1.</title>
        <authorList>
            <person name="Cooper E.M."/>
            <person name="Cutcliffe C."/>
            <person name="Kristiansen T.Z."/>
            <person name="Pandey A."/>
            <person name="Pickart C.M."/>
            <person name="Cohen R.E."/>
        </authorList>
    </citation>
    <scope>IDENTIFICATION IN THE BRISC COMPLEX</scope>
</reference>
<reference key="13">
    <citation type="journal article" date="2009" name="Genes Dev.">
        <title>MERIT40 controls BRCA1-Rap80 complex integrity and recruitment to DNA double-strand breaks.</title>
        <authorList>
            <person name="Shao G."/>
            <person name="Patterson-Fortin J."/>
            <person name="Messick T.E."/>
            <person name="Feng D."/>
            <person name="Shanbhag N."/>
            <person name="Wang Y."/>
            <person name="Greenberg R.A."/>
        </authorList>
    </citation>
    <scope>IDENTIFICATION IN THE BRCA1-A COMPLEX</scope>
</reference>
<reference key="14">
    <citation type="journal article" date="2009" name="Genes Dev.">
        <title>NBA1, a new player in the Brca1 A complex, is required for DNA damage resistance and checkpoint control.</title>
        <authorList>
            <person name="Wang B."/>
            <person name="Hurov K."/>
            <person name="Hofmann K."/>
            <person name="Elledge S.J."/>
        </authorList>
    </citation>
    <scope>FUNCTION</scope>
    <scope>IDENTIFICATION IN THE BRCA1-A COMPLEX</scope>
    <scope>DOMAIN UEV-LIKE</scope>
    <scope>UBIQUITIN-BINDING</scope>
    <scope>INTERACTION WITH ABRAXAS1</scope>
</reference>
<reference key="15">
    <citation type="journal article" date="2009" name="Genes Dev.">
        <title>MERIT40 facilitates BRCA1 localization and DNA damage repair.</title>
        <authorList>
            <person name="Feng L."/>
            <person name="Huang J."/>
            <person name="Chen J."/>
        </authorList>
    </citation>
    <scope>FUNCTION</scope>
    <scope>IDENTIFICATION BY MASS SPECTROMETRY</scope>
    <scope>IDENTIFICATION IN THE BRCA1-A COMPLEX</scope>
    <scope>SUBCELLULAR LOCATION</scope>
    <scope>INTERACTION WITH ABRAXAS1; BABAM1 AND BRCC3</scope>
</reference>
<reference key="16">
    <citation type="journal article" date="2010" name="Sci. Signal.">
        <title>Quantitative phosphoproteomics reveals widespread full phosphorylation site occupancy during mitosis.</title>
        <authorList>
            <person name="Olsen J.V."/>
            <person name="Vermeulen M."/>
            <person name="Santamaria A."/>
            <person name="Kumar C."/>
            <person name="Miller M.L."/>
            <person name="Jensen L.J."/>
            <person name="Gnad F."/>
            <person name="Cox J."/>
            <person name="Jensen T.S."/>
            <person name="Nigg E.A."/>
            <person name="Brunak S."/>
            <person name="Mann M."/>
        </authorList>
    </citation>
    <scope>ACETYLATION [LARGE SCALE ANALYSIS] AT MET-1</scope>
    <scope>PHOSPHORYLATION [LARGE SCALE ANALYSIS] AT SER-2</scope>
    <scope>IDENTIFICATION BY MASS SPECTROMETRY [LARGE SCALE ANALYSIS]</scope>
    <source>
        <tissue>Cervix carcinoma</tissue>
    </source>
</reference>
<reference key="17">
    <citation type="journal article" date="2011" name="BMC Syst. Biol.">
        <title>Initial characterization of the human central proteome.</title>
        <authorList>
            <person name="Burkard T.R."/>
            <person name="Planyavsky M."/>
            <person name="Kaupe I."/>
            <person name="Breitwieser F.P."/>
            <person name="Buerckstuemmer T."/>
            <person name="Bennett K.L."/>
            <person name="Superti-Furga G."/>
            <person name="Colinge J."/>
        </authorList>
    </citation>
    <scope>IDENTIFICATION BY MASS SPECTROMETRY [LARGE SCALE ANALYSIS]</scope>
</reference>
<reference key="18">
    <citation type="journal article" date="2011" name="J. Biol. Chem.">
        <title>NBA1/MERIT40 and BRE interaction is required for the integrity of two distinct deubiquitinating enzyme BRCC36-containing complexes.</title>
        <authorList>
            <person name="Hu X."/>
            <person name="Kim J.A."/>
            <person name="Castillo A."/>
            <person name="Huang M."/>
            <person name="Liu J."/>
            <person name="Wang B."/>
        </authorList>
    </citation>
    <scope>IDENTIFICATION IN ARISC COMPLEX</scope>
    <scope>IDENTIFICATION IN BRISC COMPLEX</scope>
    <scope>INTERACTION WITH BABAM1</scope>
</reference>
<reference key="19">
    <citation type="journal article" date="2012" name="Mol. Cell. Proteomics">
        <title>Comparative large-scale characterisation of plant vs. mammal proteins reveals similar and idiosyncratic N-alpha acetylation features.</title>
        <authorList>
            <person name="Bienvenut W.V."/>
            <person name="Sumpton D."/>
            <person name="Martinez A."/>
            <person name="Lilla S."/>
            <person name="Espagne C."/>
            <person name="Meinnel T."/>
            <person name="Giglione C."/>
        </authorList>
    </citation>
    <scope>ACETYLATION [LARGE SCALE ANALYSIS] AT MET-1</scope>
    <scope>IDENTIFICATION BY MASS SPECTROMETRY [LARGE SCALE ANALYSIS]</scope>
</reference>
<reference key="20">
    <citation type="journal article" date="2012" name="Proc. Natl. Acad. Sci. U.S.A.">
        <title>N-terminal acetylome analyses and functional insights of the N-terminal acetyltransferase NatB.</title>
        <authorList>
            <person name="Van Damme P."/>
            <person name="Lasa M."/>
            <person name="Polevoda B."/>
            <person name="Gazquez C."/>
            <person name="Elosegui-Artola A."/>
            <person name="Kim D.S."/>
            <person name="De Juan-Pardo E."/>
            <person name="Demeyer K."/>
            <person name="Hole K."/>
            <person name="Larrea E."/>
            <person name="Timmerman E."/>
            <person name="Prieto J."/>
            <person name="Arnesen T."/>
            <person name="Sherman F."/>
            <person name="Gevaert K."/>
            <person name="Aldabe R."/>
        </authorList>
    </citation>
    <scope>IDENTIFICATION BY MASS SPECTROMETRY [LARGE SCALE ANALYSIS]</scope>
</reference>
<reference key="21">
    <citation type="journal article" date="2013" name="Cell Rep.">
        <title>A BRISC-SHMT complex deubiquitinates IFNAR1 and regulates interferon responses.</title>
        <authorList>
            <person name="Zheng H."/>
            <person name="Gupta V."/>
            <person name="Patterson-Fortin J."/>
            <person name="Bhattacharya S."/>
            <person name="Katlinski K."/>
            <person name="Wu J."/>
            <person name="Varghese B."/>
            <person name="Carbone C.J."/>
            <person name="Aressy B."/>
            <person name="Fuchs S.Y."/>
            <person name="Greenberg R.A."/>
        </authorList>
    </citation>
    <scope>FUNCTION</scope>
    <scope>IDENTIFICATION IN THE BRISC COMPLEX</scope>
    <scope>IDENTIFICATION BY MASS SPECTROMETRY</scope>
    <scope>IDENTIFICATION IN THE ARISC COMPLEX</scope>
    <scope>SUBCELLULAR LOCATION</scope>
</reference>
<reference key="22">
    <citation type="journal article" date="2013" name="J. Proteome Res.">
        <title>Toward a comprehensive characterization of a human cancer cell phosphoproteome.</title>
        <authorList>
            <person name="Zhou H."/>
            <person name="Di Palma S."/>
            <person name="Preisinger C."/>
            <person name="Peng M."/>
            <person name="Polat A.N."/>
            <person name="Heck A.J."/>
            <person name="Mohammed S."/>
        </authorList>
    </citation>
    <scope>PHOSPHORYLATION [LARGE SCALE ANALYSIS] AT SER-2</scope>
    <scope>IDENTIFICATION BY MASS SPECTROMETRY [LARGE SCALE ANALYSIS]</scope>
    <source>
        <tissue>Cervix carcinoma</tissue>
        <tissue>Erythroleukemia</tissue>
    </source>
</reference>
<reference key="23">
    <citation type="journal article" date="2014" name="Nat. Commun.">
        <title>ABRO1 suppresses tumourigenesis and regulates the DNA damage response by stabilizing p53.</title>
        <authorList>
            <person name="Zhang J."/>
            <person name="Cao M."/>
            <person name="Dong J."/>
            <person name="Li C."/>
            <person name="Xu W."/>
            <person name="Zhan Y."/>
            <person name="Wang X."/>
            <person name="Yu M."/>
            <person name="Ge C."/>
            <person name="Ge Z."/>
            <person name="Yang X."/>
        </authorList>
    </citation>
    <scope>IDENTIFICATION IN THE BRISC COMPLEX</scope>
</reference>
<reference key="24">
    <citation type="journal article" date="2015" name="J. Cell Biol.">
        <title>The deubiquitinating enzyme complex BRISC is required for proper mitotic spindle assembly in mammalian cells.</title>
        <authorList>
            <person name="Yan K."/>
            <person name="Li L."/>
            <person name="Wang X."/>
            <person name="Hong R."/>
            <person name="Zhang Y."/>
            <person name="Yang H."/>
            <person name="Lin M."/>
            <person name="Zhang S."/>
            <person name="He Q."/>
            <person name="Zheng D."/>
            <person name="Tang J."/>
            <person name="Yin Y."/>
            <person name="Shao G."/>
        </authorList>
    </citation>
    <scope>FUNCTION OF THE BRISC COMPLEX</scope>
</reference>